<keyword id="KW-0066">ATP synthesis</keyword>
<keyword id="KW-0138">CF(0)</keyword>
<keyword id="KW-0150">Chloroplast</keyword>
<keyword id="KW-0375">Hydrogen ion transport</keyword>
<keyword id="KW-0406">Ion transport</keyword>
<keyword id="KW-0472">Membrane</keyword>
<keyword id="KW-0934">Plastid</keyword>
<keyword id="KW-0793">Thylakoid</keyword>
<keyword id="KW-0812">Transmembrane</keyword>
<keyword id="KW-1133">Transmembrane helix</keyword>
<keyword id="KW-0813">Transport</keyword>
<geneLocation type="chloroplast"/>
<organism>
    <name type="scientific">Lotus japonicus</name>
    <name type="common">Lotus corniculatus var. japonicus</name>
    <dbReference type="NCBI Taxonomy" id="34305"/>
    <lineage>
        <taxon>Eukaryota</taxon>
        <taxon>Viridiplantae</taxon>
        <taxon>Streptophyta</taxon>
        <taxon>Embryophyta</taxon>
        <taxon>Tracheophyta</taxon>
        <taxon>Spermatophyta</taxon>
        <taxon>Magnoliopsida</taxon>
        <taxon>eudicotyledons</taxon>
        <taxon>Gunneridae</taxon>
        <taxon>Pentapetalae</taxon>
        <taxon>rosids</taxon>
        <taxon>fabids</taxon>
        <taxon>Fabales</taxon>
        <taxon>Fabaceae</taxon>
        <taxon>Papilionoideae</taxon>
        <taxon>50 kb inversion clade</taxon>
        <taxon>NPAAA clade</taxon>
        <taxon>Hologalegina</taxon>
        <taxon>robinioid clade</taxon>
        <taxon>Loteae</taxon>
        <taxon>Lotus</taxon>
    </lineage>
</organism>
<proteinExistence type="inferred from homology"/>
<gene>
    <name evidence="1" type="primary">atpI</name>
</gene>
<feature type="chain" id="PRO_0000002586" description="ATP synthase subunit a, chloroplastic">
    <location>
        <begin position="1"/>
        <end position="247"/>
    </location>
</feature>
<feature type="transmembrane region" description="Helical" evidence="1">
    <location>
        <begin position="38"/>
        <end position="58"/>
    </location>
</feature>
<feature type="transmembrane region" description="Helical" evidence="1">
    <location>
        <begin position="95"/>
        <end position="115"/>
    </location>
</feature>
<feature type="transmembrane region" description="Helical" evidence="1">
    <location>
        <begin position="134"/>
        <end position="154"/>
    </location>
</feature>
<feature type="transmembrane region" description="Helical" evidence="1">
    <location>
        <begin position="199"/>
        <end position="219"/>
    </location>
</feature>
<feature type="transmembrane region" description="Helical" evidence="1">
    <location>
        <begin position="220"/>
        <end position="240"/>
    </location>
</feature>
<dbReference type="EMBL" id="AP002983">
    <property type="protein sequence ID" value="BAB33198.1"/>
    <property type="molecule type" value="Genomic_DNA"/>
</dbReference>
<dbReference type="RefSeq" id="NP_084800.1">
    <property type="nucleotide sequence ID" value="NC_002694.1"/>
</dbReference>
<dbReference type="SMR" id="Q9BBS5"/>
<dbReference type="GeneID" id="802840"/>
<dbReference type="OMA" id="GFFWAAF"/>
<dbReference type="GO" id="GO:0009535">
    <property type="term" value="C:chloroplast thylakoid membrane"/>
    <property type="evidence" value="ECO:0007669"/>
    <property type="project" value="UniProtKB-SubCell"/>
</dbReference>
<dbReference type="GO" id="GO:0005886">
    <property type="term" value="C:plasma membrane"/>
    <property type="evidence" value="ECO:0007669"/>
    <property type="project" value="UniProtKB-UniRule"/>
</dbReference>
<dbReference type="GO" id="GO:0045259">
    <property type="term" value="C:proton-transporting ATP synthase complex"/>
    <property type="evidence" value="ECO:0007669"/>
    <property type="project" value="UniProtKB-KW"/>
</dbReference>
<dbReference type="GO" id="GO:0046933">
    <property type="term" value="F:proton-transporting ATP synthase activity, rotational mechanism"/>
    <property type="evidence" value="ECO:0007669"/>
    <property type="project" value="UniProtKB-UniRule"/>
</dbReference>
<dbReference type="CDD" id="cd00310">
    <property type="entry name" value="ATP-synt_Fo_a_6"/>
    <property type="match status" value="1"/>
</dbReference>
<dbReference type="FunFam" id="1.20.120.220:FF:000001">
    <property type="entry name" value="ATP synthase subunit a, chloroplastic"/>
    <property type="match status" value="1"/>
</dbReference>
<dbReference type="Gene3D" id="1.20.120.220">
    <property type="entry name" value="ATP synthase, F0 complex, subunit A"/>
    <property type="match status" value="1"/>
</dbReference>
<dbReference type="HAMAP" id="MF_01393">
    <property type="entry name" value="ATP_synth_a_bact"/>
    <property type="match status" value="1"/>
</dbReference>
<dbReference type="InterPro" id="IPR045082">
    <property type="entry name" value="ATP_syn_F0_a_bact/chloroplast"/>
</dbReference>
<dbReference type="InterPro" id="IPR000568">
    <property type="entry name" value="ATP_synth_F0_asu"/>
</dbReference>
<dbReference type="InterPro" id="IPR023011">
    <property type="entry name" value="ATP_synth_F0_asu_AS"/>
</dbReference>
<dbReference type="InterPro" id="IPR035908">
    <property type="entry name" value="F0_ATP_A_sf"/>
</dbReference>
<dbReference type="NCBIfam" id="TIGR01131">
    <property type="entry name" value="ATP_synt_6_or_A"/>
    <property type="match status" value="1"/>
</dbReference>
<dbReference type="PANTHER" id="PTHR42823">
    <property type="entry name" value="ATP SYNTHASE SUBUNIT A, CHLOROPLASTIC"/>
    <property type="match status" value="1"/>
</dbReference>
<dbReference type="PANTHER" id="PTHR42823:SF3">
    <property type="entry name" value="ATP SYNTHASE SUBUNIT A, CHLOROPLASTIC"/>
    <property type="match status" value="1"/>
</dbReference>
<dbReference type="Pfam" id="PF00119">
    <property type="entry name" value="ATP-synt_A"/>
    <property type="match status" value="1"/>
</dbReference>
<dbReference type="PRINTS" id="PR00123">
    <property type="entry name" value="ATPASEA"/>
</dbReference>
<dbReference type="SUPFAM" id="SSF81336">
    <property type="entry name" value="F1F0 ATP synthase subunit A"/>
    <property type="match status" value="1"/>
</dbReference>
<dbReference type="PROSITE" id="PS00449">
    <property type="entry name" value="ATPASE_A"/>
    <property type="match status" value="1"/>
</dbReference>
<reference key="1">
    <citation type="journal article" date="2000" name="DNA Res.">
        <title>Complete structure of the chloroplast genome of a legume, Lotus japonicus.</title>
        <authorList>
            <person name="Kato T."/>
            <person name="Kaneko T."/>
            <person name="Sato S."/>
            <person name="Nakamura Y."/>
            <person name="Tabata S."/>
        </authorList>
    </citation>
    <scope>NUCLEOTIDE SEQUENCE [LARGE SCALE GENOMIC DNA]</scope>
    <source>
        <strain>cv. Miyakojima MG-20</strain>
    </source>
</reference>
<name>ATPI_LOTJA</name>
<evidence type="ECO:0000255" key="1">
    <source>
        <dbReference type="HAMAP-Rule" id="MF_01393"/>
    </source>
</evidence>
<sequence>MNVLLCSINTFKRLYDISAVEVGQHFYWQMGDFQVHAQVLITSWVVIAILLGSTILVVRNPQTIPNFGQNFFEYVLEFIRDVSKTQIGEEYGPWVPFIGTLFLFIFVSNWSGALLPWKIIQLPHGELAAPTNDINTTVALALLTSVAYFYAGISKKGLAYFGKYIQPTPILLPINILEDFTKPLSLSFRLFGNILADELVVVVLVSLVPLVVPIPVMFLGLFTSGIQALIFATLAAAYIGESMEGHH</sequence>
<accession>Q9BBS5</accession>
<comment type="function">
    <text evidence="1">Key component of the proton channel; it plays a direct role in the translocation of protons across the membrane.</text>
</comment>
<comment type="subunit">
    <text evidence="1">F-type ATPases have 2 components, CF(1) - the catalytic core - and CF(0) - the membrane proton channel. CF(1) has five subunits: alpha(3), beta(3), gamma(1), delta(1), epsilon(1). CF(0) has four main subunits: a, b, b' and c.</text>
</comment>
<comment type="subcellular location">
    <subcellularLocation>
        <location evidence="1">Plastid</location>
        <location evidence="1">Chloroplast thylakoid membrane</location>
        <topology evidence="1">Multi-pass membrane protein</topology>
    </subcellularLocation>
</comment>
<comment type="similarity">
    <text evidence="1">Belongs to the ATPase A chain family.</text>
</comment>
<protein>
    <recommendedName>
        <fullName evidence="1">ATP synthase subunit a, chloroplastic</fullName>
    </recommendedName>
    <alternativeName>
        <fullName evidence="1">ATP synthase F0 sector subunit a</fullName>
    </alternativeName>
    <alternativeName>
        <fullName evidence="1">F-ATPase subunit IV</fullName>
    </alternativeName>
</protein>